<comment type="function">
    <text evidence="1">Catalyzes the conversion of dethiobiotin (DTB) to biotin by the insertion of a sulfur atom into dethiobiotin via a radical-based mechanism.</text>
</comment>
<comment type="catalytic activity">
    <reaction evidence="1">
        <text>(4R,5S)-dethiobiotin + (sulfur carrier)-SH + 2 reduced [2Fe-2S]-[ferredoxin] + 2 S-adenosyl-L-methionine = (sulfur carrier)-H + biotin + 2 5'-deoxyadenosine + 2 L-methionine + 2 oxidized [2Fe-2S]-[ferredoxin]</text>
        <dbReference type="Rhea" id="RHEA:22060"/>
        <dbReference type="Rhea" id="RHEA-COMP:10000"/>
        <dbReference type="Rhea" id="RHEA-COMP:10001"/>
        <dbReference type="Rhea" id="RHEA-COMP:14737"/>
        <dbReference type="Rhea" id="RHEA-COMP:14739"/>
        <dbReference type="ChEBI" id="CHEBI:17319"/>
        <dbReference type="ChEBI" id="CHEBI:29917"/>
        <dbReference type="ChEBI" id="CHEBI:33737"/>
        <dbReference type="ChEBI" id="CHEBI:33738"/>
        <dbReference type="ChEBI" id="CHEBI:57586"/>
        <dbReference type="ChEBI" id="CHEBI:57844"/>
        <dbReference type="ChEBI" id="CHEBI:59789"/>
        <dbReference type="ChEBI" id="CHEBI:64428"/>
        <dbReference type="ChEBI" id="CHEBI:149473"/>
        <dbReference type="EC" id="2.8.1.6"/>
    </reaction>
</comment>
<comment type="cofactor">
    <cofactor evidence="1">
        <name>[4Fe-4S] cluster</name>
        <dbReference type="ChEBI" id="CHEBI:49883"/>
    </cofactor>
    <text evidence="1">Binds 1 [4Fe-4S] cluster. The cluster is coordinated with 3 cysteines and an exchangeable S-adenosyl-L-methionine.</text>
</comment>
<comment type="cofactor">
    <cofactor evidence="1">
        <name>[2Fe-2S] cluster</name>
        <dbReference type="ChEBI" id="CHEBI:190135"/>
    </cofactor>
    <text evidence="1">Binds 1 [2Fe-2S] cluster. The cluster is coordinated with 3 cysteines and 1 arginine.</text>
</comment>
<comment type="pathway">
    <text evidence="1">Cofactor biosynthesis; biotin biosynthesis; biotin from 7,8-diaminononanoate: step 2/2.</text>
</comment>
<comment type="subunit">
    <text evidence="1">Homodimer.</text>
</comment>
<comment type="similarity">
    <text evidence="1">Belongs to the radical SAM superfamily. Biotin synthase family.</text>
</comment>
<reference key="1">
    <citation type="journal article" date="2009" name="J. Bacteriol.">
        <title>Complete and draft genome sequences of six members of the Aquificales.</title>
        <authorList>
            <person name="Reysenbach A.-L."/>
            <person name="Hamamura N."/>
            <person name="Podar M."/>
            <person name="Griffiths E."/>
            <person name="Ferreira S."/>
            <person name="Hochstein R."/>
            <person name="Heidelberg J."/>
            <person name="Johnson J."/>
            <person name="Mead D."/>
            <person name="Pohorille A."/>
            <person name="Sarmiento M."/>
            <person name="Schweighofer K."/>
            <person name="Seshadri R."/>
            <person name="Voytek M.A."/>
        </authorList>
    </citation>
    <scope>NUCLEOTIDE SEQUENCE [LARGE SCALE GENOMIC DNA]</scope>
    <source>
        <strain>Y04AAS1</strain>
    </source>
</reference>
<proteinExistence type="inferred from homology"/>
<accession>B4U973</accession>
<evidence type="ECO:0000255" key="1">
    <source>
        <dbReference type="HAMAP-Rule" id="MF_01694"/>
    </source>
</evidence>
<evidence type="ECO:0000255" key="2">
    <source>
        <dbReference type="PROSITE-ProRule" id="PRU01266"/>
    </source>
</evidence>
<feature type="chain" id="PRO_0000381430" description="Biotin synthase">
    <location>
        <begin position="1"/>
        <end position="331"/>
    </location>
</feature>
<feature type="domain" description="Radical SAM core" evidence="2">
    <location>
        <begin position="48"/>
        <end position="278"/>
    </location>
</feature>
<feature type="binding site" evidence="1">
    <location>
        <position position="66"/>
    </location>
    <ligand>
        <name>[4Fe-4S] cluster</name>
        <dbReference type="ChEBI" id="CHEBI:49883"/>
        <note>4Fe-4S-S-AdoMet</note>
    </ligand>
</feature>
<feature type="binding site" evidence="1">
    <location>
        <position position="70"/>
    </location>
    <ligand>
        <name>[4Fe-4S] cluster</name>
        <dbReference type="ChEBI" id="CHEBI:49883"/>
        <note>4Fe-4S-S-AdoMet</note>
    </ligand>
</feature>
<feature type="binding site" evidence="1">
    <location>
        <position position="73"/>
    </location>
    <ligand>
        <name>[4Fe-4S] cluster</name>
        <dbReference type="ChEBI" id="CHEBI:49883"/>
        <note>4Fe-4S-S-AdoMet</note>
    </ligand>
</feature>
<feature type="binding site" evidence="1">
    <location>
        <position position="110"/>
    </location>
    <ligand>
        <name>[2Fe-2S] cluster</name>
        <dbReference type="ChEBI" id="CHEBI:190135"/>
    </ligand>
</feature>
<feature type="binding site" evidence="1">
    <location>
        <position position="143"/>
    </location>
    <ligand>
        <name>[2Fe-2S] cluster</name>
        <dbReference type="ChEBI" id="CHEBI:190135"/>
    </ligand>
</feature>
<feature type="binding site" evidence="1">
    <location>
        <position position="203"/>
    </location>
    <ligand>
        <name>[2Fe-2S] cluster</name>
        <dbReference type="ChEBI" id="CHEBI:190135"/>
    </ligand>
</feature>
<feature type="binding site" evidence="1">
    <location>
        <position position="273"/>
    </location>
    <ligand>
        <name>[2Fe-2S] cluster</name>
        <dbReference type="ChEBI" id="CHEBI:190135"/>
    </ligand>
</feature>
<sequence>MEQVFFDIYQKAKNDEISKEEALFILKAEDKYIPLIVYLTSKLKDEFFDSQKFEFCSIINAKSGACSEDCKFCAQSKFYKTPINIYKLVDKEELVEGAIRGVEFGANRYCMVLSSRAASDEEVEKLCEAVQEIKAQNIPINVCVSAGTIGLESLLKLKEAGVTRINHNLETSENYFPNIVSTHTWKERLETIKNVQKAGLSTCSGVIFGLGETDEDRVDLAFVYKELGVDSIPLNFLMPIPNTPLENNKPLRALDALKIIAMFRFINKSAELRLCGGREQTLGDFHGMAAFMTNALMAGGYLTRAGRDIKKDYKMLEDMNLERLTSEEVCK</sequence>
<keyword id="KW-0001">2Fe-2S</keyword>
<keyword id="KW-0004">4Fe-4S</keyword>
<keyword id="KW-0093">Biotin biosynthesis</keyword>
<keyword id="KW-0408">Iron</keyword>
<keyword id="KW-0411">Iron-sulfur</keyword>
<keyword id="KW-0479">Metal-binding</keyword>
<keyword id="KW-0949">S-adenosyl-L-methionine</keyword>
<keyword id="KW-0808">Transferase</keyword>
<organism>
    <name type="scientific">Hydrogenobaculum sp. (strain Y04AAS1)</name>
    <dbReference type="NCBI Taxonomy" id="380749"/>
    <lineage>
        <taxon>Bacteria</taxon>
        <taxon>Pseudomonadati</taxon>
        <taxon>Aquificota</taxon>
        <taxon>Aquificia</taxon>
        <taxon>Aquificales</taxon>
        <taxon>Aquificaceae</taxon>
        <taxon>Hydrogenobaculum</taxon>
    </lineage>
</organism>
<protein>
    <recommendedName>
        <fullName evidence="1">Biotin synthase</fullName>
        <ecNumber evidence="1">2.8.1.6</ecNumber>
    </recommendedName>
</protein>
<name>BIOB_HYDS0</name>
<gene>
    <name evidence="1" type="primary">bioB</name>
    <name type="ordered locus">HY04AAS1_0998</name>
</gene>
<dbReference type="EC" id="2.8.1.6" evidence="1"/>
<dbReference type="EMBL" id="CP001130">
    <property type="protein sequence ID" value="ACG57684.1"/>
    <property type="molecule type" value="Genomic_DNA"/>
</dbReference>
<dbReference type="RefSeq" id="WP_012514040.1">
    <property type="nucleotide sequence ID" value="NC_011126.1"/>
</dbReference>
<dbReference type="SMR" id="B4U973"/>
<dbReference type="STRING" id="380749.HY04AAS1_0998"/>
<dbReference type="KEGG" id="hya:HY04AAS1_0998"/>
<dbReference type="eggNOG" id="COG0502">
    <property type="taxonomic scope" value="Bacteria"/>
</dbReference>
<dbReference type="HOGENOM" id="CLU_033172_2_1_0"/>
<dbReference type="OrthoDB" id="9786826at2"/>
<dbReference type="UniPathway" id="UPA00078">
    <property type="reaction ID" value="UER00162"/>
</dbReference>
<dbReference type="GO" id="GO:0051537">
    <property type="term" value="F:2 iron, 2 sulfur cluster binding"/>
    <property type="evidence" value="ECO:0007669"/>
    <property type="project" value="UniProtKB-KW"/>
</dbReference>
<dbReference type="GO" id="GO:0051539">
    <property type="term" value="F:4 iron, 4 sulfur cluster binding"/>
    <property type="evidence" value="ECO:0007669"/>
    <property type="project" value="UniProtKB-KW"/>
</dbReference>
<dbReference type="GO" id="GO:0004076">
    <property type="term" value="F:biotin synthase activity"/>
    <property type="evidence" value="ECO:0007669"/>
    <property type="project" value="UniProtKB-UniRule"/>
</dbReference>
<dbReference type="GO" id="GO:0005506">
    <property type="term" value="F:iron ion binding"/>
    <property type="evidence" value="ECO:0007669"/>
    <property type="project" value="UniProtKB-UniRule"/>
</dbReference>
<dbReference type="GO" id="GO:0009102">
    <property type="term" value="P:biotin biosynthetic process"/>
    <property type="evidence" value="ECO:0007669"/>
    <property type="project" value="UniProtKB-UniRule"/>
</dbReference>
<dbReference type="CDD" id="cd01335">
    <property type="entry name" value="Radical_SAM"/>
    <property type="match status" value="1"/>
</dbReference>
<dbReference type="FunFam" id="3.20.20.70:FF:000026">
    <property type="entry name" value="Biotin synthase"/>
    <property type="match status" value="1"/>
</dbReference>
<dbReference type="Gene3D" id="3.20.20.70">
    <property type="entry name" value="Aldolase class I"/>
    <property type="match status" value="1"/>
</dbReference>
<dbReference type="HAMAP" id="MF_01694">
    <property type="entry name" value="BioB"/>
    <property type="match status" value="1"/>
</dbReference>
<dbReference type="InterPro" id="IPR013785">
    <property type="entry name" value="Aldolase_TIM"/>
</dbReference>
<dbReference type="InterPro" id="IPR010722">
    <property type="entry name" value="BATS_dom"/>
</dbReference>
<dbReference type="InterPro" id="IPR002684">
    <property type="entry name" value="Biotin_synth/BioAB"/>
</dbReference>
<dbReference type="InterPro" id="IPR024177">
    <property type="entry name" value="Biotin_synthase"/>
</dbReference>
<dbReference type="InterPro" id="IPR006638">
    <property type="entry name" value="Elp3/MiaA/NifB-like_rSAM"/>
</dbReference>
<dbReference type="InterPro" id="IPR007197">
    <property type="entry name" value="rSAM"/>
</dbReference>
<dbReference type="NCBIfam" id="TIGR00433">
    <property type="entry name" value="bioB"/>
    <property type="match status" value="1"/>
</dbReference>
<dbReference type="PANTHER" id="PTHR22976">
    <property type="entry name" value="BIOTIN SYNTHASE"/>
    <property type="match status" value="1"/>
</dbReference>
<dbReference type="PANTHER" id="PTHR22976:SF2">
    <property type="entry name" value="BIOTIN SYNTHASE, MITOCHONDRIAL"/>
    <property type="match status" value="1"/>
</dbReference>
<dbReference type="Pfam" id="PF06968">
    <property type="entry name" value="BATS"/>
    <property type="match status" value="1"/>
</dbReference>
<dbReference type="Pfam" id="PF04055">
    <property type="entry name" value="Radical_SAM"/>
    <property type="match status" value="1"/>
</dbReference>
<dbReference type="PIRSF" id="PIRSF001619">
    <property type="entry name" value="Biotin_synth"/>
    <property type="match status" value="1"/>
</dbReference>
<dbReference type="SFLD" id="SFLDG01060">
    <property type="entry name" value="BATS_domain_containing"/>
    <property type="match status" value="1"/>
</dbReference>
<dbReference type="SFLD" id="SFLDG01278">
    <property type="entry name" value="biotin_synthase_like"/>
    <property type="match status" value="1"/>
</dbReference>
<dbReference type="SMART" id="SM00876">
    <property type="entry name" value="BATS"/>
    <property type="match status" value="1"/>
</dbReference>
<dbReference type="SMART" id="SM00729">
    <property type="entry name" value="Elp3"/>
    <property type="match status" value="1"/>
</dbReference>
<dbReference type="SUPFAM" id="SSF102114">
    <property type="entry name" value="Radical SAM enzymes"/>
    <property type="match status" value="1"/>
</dbReference>
<dbReference type="PROSITE" id="PS51918">
    <property type="entry name" value="RADICAL_SAM"/>
    <property type="match status" value="1"/>
</dbReference>